<keyword id="KW-1185">Reference proteome</keyword>
<sequence>MADLGNPFDLEMLCLVTGRDFRWSIPHLDPVTKQPTPWPAGDLFLELETGGEHNALHQVYITGATGGTYTLNLNGTDTPAIDYNDVSENPQGLAGDIQDAIDAALGAGNGLVHPVSLFPAWTLNFNLNARKPLTEQLVNTINKATNDFFDAFDQLLGVDVEMTVTDTLNFQLKVTSRRSFDEVGVVTFAVGVTSTAVKNFFNGFSGLIGAVNTVNVDFYWNRTYDIEFVGELAETPVPASTANAAGLTGTSKAITVSVVEPGKDRLTIWPFTIDGVTASIKVESEEADKIPNRCRWQLVHLPTGEAAGGDPKQLGVVYRQPR</sequence>
<name>VG06_BPMD2</name>
<protein>
    <recommendedName>
        <fullName>Minor tail protein Gp6</fullName>
    </recommendedName>
</protein>
<accession>O64202</accession>
<organism>
    <name type="scientific">Mycobacterium phage D29</name>
    <name type="common">Mycobacteriophage D29</name>
    <dbReference type="NCBI Taxonomy" id="28369"/>
    <lineage>
        <taxon>Viruses</taxon>
        <taxon>Duplodnaviria</taxon>
        <taxon>Heunggongvirae</taxon>
        <taxon>Uroviricota</taxon>
        <taxon>Caudoviricetes</taxon>
        <taxon>Fromanvirus</taxon>
    </lineage>
</organism>
<reference key="1">
    <citation type="journal article" date="1998" name="J. Mol. Biol.">
        <title>Genome structure of mycobacteriophage D29: implications for phage evolution.</title>
        <authorList>
            <person name="Ford M.E."/>
            <person name="Sarkis G.J."/>
            <person name="Belanger A.E."/>
            <person name="Hendrix R.W."/>
            <person name="Hatfull G.F."/>
        </authorList>
    </citation>
    <scope>NUCLEOTIDE SEQUENCE [LARGE SCALE GENOMIC DNA]</scope>
</reference>
<dbReference type="EMBL" id="AF022214">
    <property type="protein sequence ID" value="AAC18449.1"/>
    <property type="molecule type" value="Genomic_DNA"/>
</dbReference>
<dbReference type="PIR" id="F72800">
    <property type="entry name" value="F72800"/>
</dbReference>
<dbReference type="RefSeq" id="NP_046824.1">
    <property type="nucleotide sequence ID" value="NC_001900.1"/>
</dbReference>
<dbReference type="GeneID" id="1261569"/>
<dbReference type="KEGG" id="vg:1261569"/>
<dbReference type="OrthoDB" id="5601at10239"/>
<dbReference type="Proteomes" id="UP000002131">
    <property type="component" value="Segment"/>
</dbReference>
<dbReference type="InterPro" id="IPR055688">
    <property type="entry name" value="LtfC/p132/Gp6_b-sand"/>
</dbReference>
<dbReference type="Pfam" id="PF23926">
    <property type="entry name" value="LtfC"/>
    <property type="match status" value="1"/>
</dbReference>
<gene>
    <name type="primary">6</name>
</gene>
<feature type="initiator methionine" description="Removed; by host" evidence="1">
    <location>
        <position position="1"/>
    </location>
</feature>
<feature type="chain" id="PRO_0000164706" description="Minor tail protein Gp6">
    <location>
        <begin position="2"/>
        <end position="322"/>
    </location>
</feature>
<proteinExistence type="inferred from homology"/>
<organismHost>
    <name type="scientific">Mycobacterium</name>
    <dbReference type="NCBI Taxonomy" id="1763"/>
</organismHost>
<evidence type="ECO:0000250" key="1"/>